<protein>
    <recommendedName>
        <fullName evidence="1">NADPH-dependent 7-cyano-7-deazaguanine reductase</fullName>
        <ecNumber evidence="1">1.7.1.13</ecNumber>
    </recommendedName>
    <alternativeName>
        <fullName evidence="1">7-cyano-7-carbaguanine reductase</fullName>
    </alternativeName>
    <alternativeName>
        <fullName evidence="1">NADPH-dependent nitrile oxidoreductase</fullName>
    </alternativeName>
    <alternativeName>
        <fullName evidence="1">PreQ(0) reductase</fullName>
    </alternativeName>
</protein>
<organism>
    <name type="scientific">Klebsiella pneumoniae subsp. pneumoniae (strain ATCC 700721 / MGH 78578)</name>
    <dbReference type="NCBI Taxonomy" id="272620"/>
    <lineage>
        <taxon>Bacteria</taxon>
        <taxon>Pseudomonadati</taxon>
        <taxon>Pseudomonadota</taxon>
        <taxon>Gammaproteobacteria</taxon>
        <taxon>Enterobacterales</taxon>
        <taxon>Enterobacteriaceae</taxon>
        <taxon>Klebsiella/Raoultella group</taxon>
        <taxon>Klebsiella</taxon>
        <taxon>Klebsiella pneumoniae complex</taxon>
    </lineage>
</organism>
<sequence>MSSYDNHQALAGLTLGKSTDYRDTYDASLLQGVPRSLNRDPLGLHADNLPFHGADIWTLYELSWLNGKGLPQVAVGHVELPDTSLNLVESKSFKLYLNSFNQTRFASWQDVAETLTRDLSACAQGKVKVSLYRLDELEGQPIARLHGTCIDDQDIEIDNYQFSADYLQGAASGKIVEETLVSHLLKSNCLITHQPDWGSVQIQYRGAKIDREQLLRYLVSFRHHNEFHEQCVERIFNDILRFCQPESLSVYARYTRRGGLDINPWRSNGDFSPATGRLARQ</sequence>
<gene>
    <name evidence="1" type="primary">queF</name>
    <name type="ordered locus">KPN78578_30770</name>
    <name type="ORF">KPN_03137</name>
</gene>
<accession>A6TD67</accession>
<comment type="function">
    <text evidence="1">Catalyzes the NADPH-dependent reduction of 7-cyano-7-deazaguanine (preQ0) to 7-aminomethyl-7-deazaguanine (preQ1).</text>
</comment>
<comment type="catalytic activity">
    <reaction evidence="1">
        <text>7-aminomethyl-7-carbaguanine + 2 NADP(+) = 7-cyano-7-deazaguanine + 2 NADPH + 3 H(+)</text>
        <dbReference type="Rhea" id="RHEA:13409"/>
        <dbReference type="ChEBI" id="CHEBI:15378"/>
        <dbReference type="ChEBI" id="CHEBI:45075"/>
        <dbReference type="ChEBI" id="CHEBI:57783"/>
        <dbReference type="ChEBI" id="CHEBI:58349"/>
        <dbReference type="ChEBI" id="CHEBI:58703"/>
        <dbReference type="EC" id="1.7.1.13"/>
    </reaction>
</comment>
<comment type="pathway">
    <text evidence="1">tRNA modification; tRNA-queuosine biosynthesis.</text>
</comment>
<comment type="subunit">
    <text evidence="1">Homodimer.</text>
</comment>
<comment type="subcellular location">
    <subcellularLocation>
        <location evidence="1">Cytoplasm</location>
    </subcellularLocation>
</comment>
<comment type="similarity">
    <text evidence="1">Belongs to the GTP cyclohydrolase I family. QueF type 2 subfamily.</text>
</comment>
<keyword id="KW-0963">Cytoplasm</keyword>
<keyword id="KW-0521">NADP</keyword>
<keyword id="KW-0560">Oxidoreductase</keyword>
<keyword id="KW-0671">Queuosine biosynthesis</keyword>
<evidence type="ECO:0000255" key="1">
    <source>
        <dbReference type="HAMAP-Rule" id="MF_00817"/>
    </source>
</evidence>
<proteinExistence type="inferred from homology"/>
<feature type="chain" id="PRO_1000062346" description="NADPH-dependent 7-cyano-7-deazaguanine reductase">
    <location>
        <begin position="1"/>
        <end position="281"/>
    </location>
</feature>
<feature type="active site" description="Thioimide intermediate" evidence="1">
    <location>
        <position position="189"/>
    </location>
</feature>
<feature type="active site" description="Proton donor" evidence="1">
    <location>
        <position position="196"/>
    </location>
</feature>
<feature type="binding site" evidence="1">
    <location>
        <begin position="88"/>
        <end position="90"/>
    </location>
    <ligand>
        <name>substrate</name>
    </ligand>
</feature>
<feature type="binding site" evidence="1">
    <location>
        <begin position="90"/>
        <end position="91"/>
    </location>
    <ligand>
        <name>NADPH</name>
        <dbReference type="ChEBI" id="CHEBI:57783"/>
    </ligand>
</feature>
<feature type="binding site" evidence="1">
    <location>
        <begin position="228"/>
        <end position="229"/>
    </location>
    <ligand>
        <name>substrate</name>
    </ligand>
</feature>
<feature type="binding site" evidence="1">
    <location>
        <begin position="257"/>
        <end position="258"/>
    </location>
    <ligand>
        <name>NADPH</name>
        <dbReference type="ChEBI" id="CHEBI:57783"/>
    </ligand>
</feature>
<reference key="1">
    <citation type="submission" date="2006-09" db="EMBL/GenBank/DDBJ databases">
        <authorList>
            <consortium name="The Klebsiella pneumonia Genome Sequencing Project"/>
            <person name="McClelland M."/>
            <person name="Sanderson E.K."/>
            <person name="Spieth J."/>
            <person name="Clifton W.S."/>
            <person name="Latreille P."/>
            <person name="Sabo A."/>
            <person name="Pepin K."/>
            <person name="Bhonagiri V."/>
            <person name="Porwollik S."/>
            <person name="Ali J."/>
            <person name="Wilson R.K."/>
        </authorList>
    </citation>
    <scope>NUCLEOTIDE SEQUENCE [LARGE SCALE GENOMIC DNA]</scope>
    <source>
        <strain>ATCC 700721 / MGH 78578</strain>
    </source>
</reference>
<name>QUEF_KLEP7</name>
<dbReference type="EC" id="1.7.1.13" evidence="1"/>
<dbReference type="EMBL" id="CP000647">
    <property type="protein sequence ID" value="ABR78538.1"/>
    <property type="molecule type" value="Genomic_DNA"/>
</dbReference>
<dbReference type="RefSeq" id="WP_004174633.1">
    <property type="nucleotide sequence ID" value="NC_009648.1"/>
</dbReference>
<dbReference type="SMR" id="A6TD67"/>
<dbReference type="STRING" id="272620.KPN_03137"/>
<dbReference type="jPOST" id="A6TD67"/>
<dbReference type="PaxDb" id="272620-KPN_03137"/>
<dbReference type="EnsemblBacteria" id="ABR78538">
    <property type="protein sequence ID" value="ABR78538"/>
    <property type="gene ID" value="KPN_03137"/>
</dbReference>
<dbReference type="KEGG" id="kpn:KPN_03137"/>
<dbReference type="HOGENOM" id="CLU_054738_0_0_6"/>
<dbReference type="UniPathway" id="UPA00392"/>
<dbReference type="Proteomes" id="UP000000265">
    <property type="component" value="Chromosome"/>
</dbReference>
<dbReference type="GO" id="GO:0005737">
    <property type="term" value="C:cytoplasm"/>
    <property type="evidence" value="ECO:0007669"/>
    <property type="project" value="UniProtKB-SubCell"/>
</dbReference>
<dbReference type="GO" id="GO:0033739">
    <property type="term" value="F:preQ1 synthase activity"/>
    <property type="evidence" value="ECO:0007669"/>
    <property type="project" value="UniProtKB-UniRule"/>
</dbReference>
<dbReference type="GO" id="GO:0008616">
    <property type="term" value="P:queuosine biosynthetic process"/>
    <property type="evidence" value="ECO:0007669"/>
    <property type="project" value="UniProtKB-UniRule"/>
</dbReference>
<dbReference type="GO" id="GO:0006400">
    <property type="term" value="P:tRNA modification"/>
    <property type="evidence" value="ECO:0007669"/>
    <property type="project" value="UniProtKB-UniRule"/>
</dbReference>
<dbReference type="Gene3D" id="3.30.1130.10">
    <property type="match status" value="2"/>
</dbReference>
<dbReference type="HAMAP" id="MF_00817">
    <property type="entry name" value="QueF_type2"/>
    <property type="match status" value="1"/>
</dbReference>
<dbReference type="InterPro" id="IPR043133">
    <property type="entry name" value="GTP-CH-I_C/QueF"/>
</dbReference>
<dbReference type="InterPro" id="IPR050084">
    <property type="entry name" value="NADPH_dep_7-cyano-7-deazaG_red"/>
</dbReference>
<dbReference type="InterPro" id="IPR029500">
    <property type="entry name" value="QueF"/>
</dbReference>
<dbReference type="InterPro" id="IPR029139">
    <property type="entry name" value="QueF_N"/>
</dbReference>
<dbReference type="InterPro" id="IPR016428">
    <property type="entry name" value="QueF_type2"/>
</dbReference>
<dbReference type="NCBIfam" id="TIGR03138">
    <property type="entry name" value="QueF"/>
    <property type="match status" value="1"/>
</dbReference>
<dbReference type="PANTHER" id="PTHR34354">
    <property type="entry name" value="NADPH-DEPENDENT 7-CYANO-7-DEAZAGUANINE REDUCTASE"/>
    <property type="match status" value="1"/>
</dbReference>
<dbReference type="PANTHER" id="PTHR34354:SF1">
    <property type="entry name" value="NADPH-DEPENDENT 7-CYANO-7-DEAZAGUANINE REDUCTASE"/>
    <property type="match status" value="1"/>
</dbReference>
<dbReference type="Pfam" id="PF14489">
    <property type="entry name" value="QueF"/>
    <property type="match status" value="1"/>
</dbReference>
<dbReference type="Pfam" id="PF14819">
    <property type="entry name" value="QueF_N"/>
    <property type="match status" value="1"/>
</dbReference>
<dbReference type="PIRSF" id="PIRSF004750">
    <property type="entry name" value="Nitrile_oxidored_YqcD_prd"/>
    <property type="match status" value="1"/>
</dbReference>
<dbReference type="SUPFAM" id="SSF55620">
    <property type="entry name" value="Tetrahydrobiopterin biosynthesis enzymes-like"/>
    <property type="match status" value="1"/>
</dbReference>